<protein>
    <recommendedName>
        <fullName evidence="1">Putative pre-16S rRNA nuclease</fullName>
        <ecNumber evidence="1">3.1.-.-</ecNumber>
    </recommendedName>
</protein>
<name>YQGF_CUPMC</name>
<keyword id="KW-0963">Cytoplasm</keyword>
<keyword id="KW-0378">Hydrolase</keyword>
<keyword id="KW-0540">Nuclease</keyword>
<keyword id="KW-1185">Reference proteome</keyword>
<keyword id="KW-0690">Ribosome biogenesis</keyword>
<accession>Q1LJR1</accession>
<dbReference type="EC" id="3.1.-.-" evidence="1"/>
<dbReference type="EMBL" id="CP000352">
    <property type="protein sequence ID" value="ABF09615.1"/>
    <property type="molecule type" value="Genomic_DNA"/>
</dbReference>
<dbReference type="SMR" id="Q1LJR1"/>
<dbReference type="STRING" id="266264.Rmet_2742"/>
<dbReference type="KEGG" id="rme:Rmet_2742"/>
<dbReference type="eggNOG" id="COG0816">
    <property type="taxonomic scope" value="Bacteria"/>
</dbReference>
<dbReference type="HOGENOM" id="CLU_098240_3_2_4"/>
<dbReference type="Proteomes" id="UP000002429">
    <property type="component" value="Chromosome"/>
</dbReference>
<dbReference type="GO" id="GO:0005829">
    <property type="term" value="C:cytosol"/>
    <property type="evidence" value="ECO:0007669"/>
    <property type="project" value="TreeGrafter"/>
</dbReference>
<dbReference type="GO" id="GO:0004518">
    <property type="term" value="F:nuclease activity"/>
    <property type="evidence" value="ECO:0007669"/>
    <property type="project" value="UniProtKB-KW"/>
</dbReference>
<dbReference type="GO" id="GO:0000967">
    <property type="term" value="P:rRNA 5'-end processing"/>
    <property type="evidence" value="ECO:0007669"/>
    <property type="project" value="UniProtKB-UniRule"/>
</dbReference>
<dbReference type="CDD" id="cd16964">
    <property type="entry name" value="YqgF"/>
    <property type="match status" value="1"/>
</dbReference>
<dbReference type="Gene3D" id="3.30.420.140">
    <property type="entry name" value="YqgF/RNase H-like domain"/>
    <property type="match status" value="1"/>
</dbReference>
<dbReference type="HAMAP" id="MF_00651">
    <property type="entry name" value="Nuclease_YqgF"/>
    <property type="match status" value="1"/>
</dbReference>
<dbReference type="InterPro" id="IPR012337">
    <property type="entry name" value="RNaseH-like_sf"/>
</dbReference>
<dbReference type="InterPro" id="IPR005227">
    <property type="entry name" value="YqgF"/>
</dbReference>
<dbReference type="InterPro" id="IPR006641">
    <property type="entry name" value="YqgF/RNaseH-like_dom"/>
</dbReference>
<dbReference type="InterPro" id="IPR037027">
    <property type="entry name" value="YqgF/RNaseH-like_dom_sf"/>
</dbReference>
<dbReference type="NCBIfam" id="TIGR00250">
    <property type="entry name" value="RNAse_H_YqgF"/>
    <property type="match status" value="1"/>
</dbReference>
<dbReference type="PANTHER" id="PTHR33317">
    <property type="entry name" value="POLYNUCLEOTIDYL TRANSFERASE, RIBONUCLEASE H-LIKE SUPERFAMILY PROTEIN"/>
    <property type="match status" value="1"/>
</dbReference>
<dbReference type="PANTHER" id="PTHR33317:SF4">
    <property type="entry name" value="POLYNUCLEOTIDYL TRANSFERASE, RIBONUCLEASE H-LIKE SUPERFAMILY PROTEIN"/>
    <property type="match status" value="1"/>
</dbReference>
<dbReference type="Pfam" id="PF03652">
    <property type="entry name" value="RuvX"/>
    <property type="match status" value="1"/>
</dbReference>
<dbReference type="SMART" id="SM00732">
    <property type="entry name" value="YqgFc"/>
    <property type="match status" value="1"/>
</dbReference>
<dbReference type="SUPFAM" id="SSF53098">
    <property type="entry name" value="Ribonuclease H-like"/>
    <property type="match status" value="1"/>
</dbReference>
<comment type="function">
    <text evidence="1">Could be a nuclease involved in processing of the 5'-end of pre-16S rRNA.</text>
</comment>
<comment type="subcellular location">
    <subcellularLocation>
        <location evidence="1">Cytoplasm</location>
    </subcellularLocation>
</comment>
<comment type="similarity">
    <text evidence="1">Belongs to the YqgF nuclease family.</text>
</comment>
<proteinExistence type="inferred from homology"/>
<gene>
    <name type="ordered locus">Rmet_2742</name>
</gene>
<reference key="1">
    <citation type="journal article" date="2010" name="PLoS ONE">
        <title>The complete genome sequence of Cupriavidus metallidurans strain CH34, a master survivalist in harsh and anthropogenic environments.</title>
        <authorList>
            <person name="Janssen P.J."/>
            <person name="Van Houdt R."/>
            <person name="Moors H."/>
            <person name="Monsieurs P."/>
            <person name="Morin N."/>
            <person name="Michaux A."/>
            <person name="Benotmane M.A."/>
            <person name="Leys N."/>
            <person name="Vallaeys T."/>
            <person name="Lapidus A."/>
            <person name="Monchy S."/>
            <person name="Medigue C."/>
            <person name="Taghavi S."/>
            <person name="McCorkle S."/>
            <person name="Dunn J."/>
            <person name="van der Lelie D."/>
            <person name="Mergeay M."/>
        </authorList>
    </citation>
    <scope>NUCLEOTIDE SEQUENCE [LARGE SCALE GENOMIC DNA]</scope>
    <source>
        <strain>ATCC 43123 / DSM 2839 / NBRC 102507 / CH34</strain>
    </source>
</reference>
<sequence>MTRDMPDQLGRETPRDGTVLAFDYGEKKIGVALGNFITRQASALTILPNVTVEARFDAVGELIRQWTPVRLVVGMPVNPEAGPDDEEQPSMRLARRFGNQLNGRFNLPVEWVDERYSSRAAAMAGAKRGALDAEAARIILQQYFDELPL</sequence>
<evidence type="ECO:0000255" key="1">
    <source>
        <dbReference type="HAMAP-Rule" id="MF_00651"/>
    </source>
</evidence>
<feature type="chain" id="PRO_0000257572" description="Putative pre-16S rRNA nuclease">
    <location>
        <begin position="1"/>
        <end position="149"/>
    </location>
</feature>
<organism>
    <name type="scientific">Cupriavidus metallidurans (strain ATCC 43123 / DSM 2839 / NBRC 102507 / CH34)</name>
    <name type="common">Ralstonia metallidurans</name>
    <dbReference type="NCBI Taxonomy" id="266264"/>
    <lineage>
        <taxon>Bacteria</taxon>
        <taxon>Pseudomonadati</taxon>
        <taxon>Pseudomonadota</taxon>
        <taxon>Betaproteobacteria</taxon>
        <taxon>Burkholderiales</taxon>
        <taxon>Burkholderiaceae</taxon>
        <taxon>Cupriavidus</taxon>
    </lineage>
</organism>